<organism>
    <name type="scientific">Burkholderia mallei (strain NCTC 10229)</name>
    <dbReference type="NCBI Taxonomy" id="412022"/>
    <lineage>
        <taxon>Bacteria</taxon>
        <taxon>Pseudomonadati</taxon>
        <taxon>Pseudomonadota</taxon>
        <taxon>Betaproteobacteria</taxon>
        <taxon>Burkholderiales</taxon>
        <taxon>Burkholderiaceae</taxon>
        <taxon>Burkholderia</taxon>
        <taxon>pseudomallei group</taxon>
    </lineage>
</organism>
<accession>A2S8L9</accession>
<sequence length="600" mass="67680">MSMRTEYCGLVTEHLLGQTVSLCGWVHRRRDHGGVIFIDLRDREGLVQVVCDPDRAEMFAAAEGVRNEFCIQVKGLVRGRPEGTINAGLKSGRIEVLCHELNVLNASVTPPFQLDDDNLSETTRLTHRVLDLRRPQMQHNLRLRYRVAIEARKYLDEQGFIDIETPMLTKSTPEGARDYLVPSRVNAGQFFALPQSPQLFKQLLMVANFDRYYQITKCFRDEDLRADRQPEFTQIDCETSFLGEQEIRDLFEDMIRHIFKTTIGVELDATFPVMPYSEAMARFGSDKPDLRVKLEFTELTDAMKDVDFKVFSTPANTKDGRVAALRVPKGGELTRGDIDGYTEFVRIYGAKGLAWIKVNERAKGRDGLQSPIVKNLHDASIAAILERTGAQDGDIIFFAADRAKVVNDSLGALRLKIGHSEFGKANGLVEAGWKPLWVVDFPMFEYDDEEARYVAAHHPFTSPKDEHLEYLETDPGRCLAKAYDMVLNGWEIGGGSVRIHREEVQSKVFRALKIGPEEAQAKFGFLLDALQYGAPPHGGIAFGLDRIVTMMAGADSIRDVIAFPKTQRAQCLLTQAPSPVDERQLRELHIRLRQPEQPKA</sequence>
<reference key="1">
    <citation type="journal article" date="2010" name="Genome Biol. Evol.">
        <title>Continuing evolution of Burkholderia mallei through genome reduction and large-scale rearrangements.</title>
        <authorList>
            <person name="Losada L."/>
            <person name="Ronning C.M."/>
            <person name="DeShazer D."/>
            <person name="Woods D."/>
            <person name="Fedorova N."/>
            <person name="Kim H.S."/>
            <person name="Shabalina S.A."/>
            <person name="Pearson T.R."/>
            <person name="Brinkac L."/>
            <person name="Tan P."/>
            <person name="Nandi T."/>
            <person name="Crabtree J."/>
            <person name="Badger J."/>
            <person name="Beckstrom-Sternberg S."/>
            <person name="Saqib M."/>
            <person name="Schutzer S.E."/>
            <person name="Keim P."/>
            <person name="Nierman W.C."/>
        </authorList>
    </citation>
    <scope>NUCLEOTIDE SEQUENCE [LARGE SCALE GENOMIC DNA]</scope>
    <source>
        <strain>NCTC 10229</strain>
    </source>
</reference>
<feature type="chain" id="PRO_1000006648" description="Aspartate--tRNA(Asp/Asn) ligase">
    <location>
        <begin position="1"/>
        <end position="600"/>
    </location>
</feature>
<feature type="region of interest" description="Aspartate" evidence="1">
    <location>
        <begin position="198"/>
        <end position="201"/>
    </location>
</feature>
<feature type="binding site" evidence="1">
    <location>
        <position position="174"/>
    </location>
    <ligand>
        <name>L-aspartate</name>
        <dbReference type="ChEBI" id="CHEBI:29991"/>
    </ligand>
</feature>
<feature type="binding site" evidence="1">
    <location>
        <begin position="220"/>
        <end position="222"/>
    </location>
    <ligand>
        <name>ATP</name>
        <dbReference type="ChEBI" id="CHEBI:30616"/>
    </ligand>
</feature>
<feature type="binding site" evidence="1">
    <location>
        <position position="220"/>
    </location>
    <ligand>
        <name>L-aspartate</name>
        <dbReference type="ChEBI" id="CHEBI:29991"/>
    </ligand>
</feature>
<feature type="binding site" evidence="1">
    <location>
        <position position="229"/>
    </location>
    <ligand>
        <name>ATP</name>
        <dbReference type="ChEBI" id="CHEBI:30616"/>
    </ligand>
</feature>
<feature type="binding site" evidence="1">
    <location>
        <position position="457"/>
    </location>
    <ligand>
        <name>L-aspartate</name>
        <dbReference type="ChEBI" id="CHEBI:29991"/>
    </ligand>
</feature>
<feature type="binding site" evidence="1">
    <location>
        <position position="491"/>
    </location>
    <ligand>
        <name>ATP</name>
        <dbReference type="ChEBI" id="CHEBI:30616"/>
    </ligand>
</feature>
<feature type="binding site" evidence="1">
    <location>
        <position position="498"/>
    </location>
    <ligand>
        <name>L-aspartate</name>
        <dbReference type="ChEBI" id="CHEBI:29991"/>
    </ligand>
</feature>
<feature type="binding site" evidence="1">
    <location>
        <begin position="543"/>
        <end position="546"/>
    </location>
    <ligand>
        <name>ATP</name>
        <dbReference type="ChEBI" id="CHEBI:30616"/>
    </ligand>
</feature>
<feature type="site" description="Important for tRNA non-discrimination" evidence="1">
    <location>
        <position position="32"/>
    </location>
</feature>
<feature type="site" description="Important for tRNA non-discrimination" evidence="1">
    <location>
        <position position="83"/>
    </location>
</feature>
<comment type="function">
    <text evidence="1">Aspartyl-tRNA synthetase with relaxed tRNA specificity since it is able to aspartylate not only its cognate tRNA(Asp) but also tRNA(Asn). Reaction proceeds in two steps: L-aspartate is first activated by ATP to form Asp-AMP and then transferred to the acceptor end of tRNA(Asp/Asn).</text>
</comment>
<comment type="catalytic activity">
    <reaction evidence="1">
        <text>tRNA(Asx) + L-aspartate + ATP = L-aspartyl-tRNA(Asx) + AMP + diphosphate</text>
        <dbReference type="Rhea" id="RHEA:18349"/>
        <dbReference type="Rhea" id="RHEA-COMP:9710"/>
        <dbReference type="Rhea" id="RHEA-COMP:9711"/>
        <dbReference type="ChEBI" id="CHEBI:29991"/>
        <dbReference type="ChEBI" id="CHEBI:30616"/>
        <dbReference type="ChEBI" id="CHEBI:33019"/>
        <dbReference type="ChEBI" id="CHEBI:78442"/>
        <dbReference type="ChEBI" id="CHEBI:78516"/>
        <dbReference type="ChEBI" id="CHEBI:456215"/>
        <dbReference type="EC" id="6.1.1.23"/>
    </reaction>
</comment>
<comment type="subunit">
    <text evidence="1">Homodimer.</text>
</comment>
<comment type="subcellular location">
    <subcellularLocation>
        <location evidence="1">Cytoplasm</location>
    </subcellularLocation>
</comment>
<comment type="similarity">
    <text evidence="1">Belongs to the class-II aminoacyl-tRNA synthetase family. Type 1 subfamily.</text>
</comment>
<evidence type="ECO:0000255" key="1">
    <source>
        <dbReference type="HAMAP-Rule" id="MF_00044"/>
    </source>
</evidence>
<gene>
    <name evidence="1" type="primary">aspS</name>
    <name type="ordered locus">BMA10229_A2326</name>
</gene>
<protein>
    <recommendedName>
        <fullName evidence="1">Aspartate--tRNA(Asp/Asn) ligase</fullName>
        <ecNumber evidence="1">6.1.1.23</ecNumber>
    </recommendedName>
    <alternativeName>
        <fullName evidence="1">Aspartyl-tRNA synthetase</fullName>
        <shortName evidence="1">AspRS</shortName>
    </alternativeName>
    <alternativeName>
        <fullName evidence="1">Non-discriminating aspartyl-tRNA synthetase</fullName>
        <shortName evidence="1">ND-AspRS</shortName>
    </alternativeName>
</protein>
<name>SYDND_BURM9</name>
<keyword id="KW-0030">Aminoacyl-tRNA synthetase</keyword>
<keyword id="KW-0067">ATP-binding</keyword>
<keyword id="KW-0963">Cytoplasm</keyword>
<keyword id="KW-0436">Ligase</keyword>
<keyword id="KW-0547">Nucleotide-binding</keyword>
<keyword id="KW-0648">Protein biosynthesis</keyword>
<proteinExistence type="inferred from homology"/>
<dbReference type="EC" id="6.1.1.23" evidence="1"/>
<dbReference type="EMBL" id="CP000546">
    <property type="protein sequence ID" value="ABN03348.1"/>
    <property type="molecule type" value="Genomic_DNA"/>
</dbReference>
<dbReference type="RefSeq" id="WP_004189849.1">
    <property type="nucleotide sequence ID" value="NC_008836.1"/>
</dbReference>
<dbReference type="SMR" id="A2S8L9"/>
<dbReference type="GeneID" id="93059156"/>
<dbReference type="KEGG" id="bml:BMA10229_A2326"/>
<dbReference type="HOGENOM" id="CLU_014330_3_2_4"/>
<dbReference type="Proteomes" id="UP000002283">
    <property type="component" value="Chromosome I"/>
</dbReference>
<dbReference type="GO" id="GO:0005737">
    <property type="term" value="C:cytoplasm"/>
    <property type="evidence" value="ECO:0007669"/>
    <property type="project" value="UniProtKB-SubCell"/>
</dbReference>
<dbReference type="GO" id="GO:0004815">
    <property type="term" value="F:aspartate-tRNA ligase activity"/>
    <property type="evidence" value="ECO:0007669"/>
    <property type="project" value="UniProtKB-UniRule"/>
</dbReference>
<dbReference type="GO" id="GO:0050560">
    <property type="term" value="F:aspartate-tRNA(Asn) ligase activity"/>
    <property type="evidence" value="ECO:0007669"/>
    <property type="project" value="UniProtKB-EC"/>
</dbReference>
<dbReference type="GO" id="GO:0005524">
    <property type="term" value="F:ATP binding"/>
    <property type="evidence" value="ECO:0007669"/>
    <property type="project" value="UniProtKB-UniRule"/>
</dbReference>
<dbReference type="GO" id="GO:0003676">
    <property type="term" value="F:nucleic acid binding"/>
    <property type="evidence" value="ECO:0007669"/>
    <property type="project" value="InterPro"/>
</dbReference>
<dbReference type="GO" id="GO:0006422">
    <property type="term" value="P:aspartyl-tRNA aminoacylation"/>
    <property type="evidence" value="ECO:0007669"/>
    <property type="project" value="UniProtKB-UniRule"/>
</dbReference>
<dbReference type="CDD" id="cd00777">
    <property type="entry name" value="AspRS_core"/>
    <property type="match status" value="1"/>
</dbReference>
<dbReference type="CDD" id="cd04317">
    <property type="entry name" value="EcAspRS_like_N"/>
    <property type="match status" value="1"/>
</dbReference>
<dbReference type="Gene3D" id="3.30.930.10">
    <property type="entry name" value="Bira Bifunctional Protein, Domain 2"/>
    <property type="match status" value="1"/>
</dbReference>
<dbReference type="Gene3D" id="3.30.1360.30">
    <property type="entry name" value="GAD-like domain"/>
    <property type="match status" value="1"/>
</dbReference>
<dbReference type="Gene3D" id="2.40.50.140">
    <property type="entry name" value="Nucleic acid-binding proteins"/>
    <property type="match status" value="1"/>
</dbReference>
<dbReference type="HAMAP" id="MF_00044">
    <property type="entry name" value="Asp_tRNA_synth_type1"/>
    <property type="match status" value="1"/>
</dbReference>
<dbReference type="InterPro" id="IPR004364">
    <property type="entry name" value="Aa-tRNA-synt_II"/>
</dbReference>
<dbReference type="InterPro" id="IPR006195">
    <property type="entry name" value="aa-tRNA-synth_II"/>
</dbReference>
<dbReference type="InterPro" id="IPR045864">
    <property type="entry name" value="aa-tRNA-synth_II/BPL/LPL"/>
</dbReference>
<dbReference type="InterPro" id="IPR004524">
    <property type="entry name" value="Asp-tRNA-ligase_1"/>
</dbReference>
<dbReference type="InterPro" id="IPR047089">
    <property type="entry name" value="Asp-tRNA-ligase_1_N"/>
</dbReference>
<dbReference type="InterPro" id="IPR002312">
    <property type="entry name" value="Asp/Asn-tRNA-synth_IIb"/>
</dbReference>
<dbReference type="InterPro" id="IPR047090">
    <property type="entry name" value="AspRS_core"/>
</dbReference>
<dbReference type="InterPro" id="IPR004115">
    <property type="entry name" value="GAD-like_sf"/>
</dbReference>
<dbReference type="InterPro" id="IPR029351">
    <property type="entry name" value="GAD_dom"/>
</dbReference>
<dbReference type="InterPro" id="IPR012340">
    <property type="entry name" value="NA-bd_OB-fold"/>
</dbReference>
<dbReference type="InterPro" id="IPR004365">
    <property type="entry name" value="NA-bd_OB_tRNA"/>
</dbReference>
<dbReference type="NCBIfam" id="TIGR00459">
    <property type="entry name" value="aspS_bact"/>
    <property type="match status" value="1"/>
</dbReference>
<dbReference type="NCBIfam" id="NF001750">
    <property type="entry name" value="PRK00476.1"/>
    <property type="match status" value="1"/>
</dbReference>
<dbReference type="PANTHER" id="PTHR22594:SF5">
    <property type="entry name" value="ASPARTATE--TRNA LIGASE, MITOCHONDRIAL"/>
    <property type="match status" value="1"/>
</dbReference>
<dbReference type="PANTHER" id="PTHR22594">
    <property type="entry name" value="ASPARTYL/LYSYL-TRNA SYNTHETASE"/>
    <property type="match status" value="1"/>
</dbReference>
<dbReference type="Pfam" id="PF02938">
    <property type="entry name" value="GAD"/>
    <property type="match status" value="1"/>
</dbReference>
<dbReference type="Pfam" id="PF00152">
    <property type="entry name" value="tRNA-synt_2"/>
    <property type="match status" value="1"/>
</dbReference>
<dbReference type="Pfam" id="PF01336">
    <property type="entry name" value="tRNA_anti-codon"/>
    <property type="match status" value="1"/>
</dbReference>
<dbReference type="PRINTS" id="PR01042">
    <property type="entry name" value="TRNASYNTHASP"/>
</dbReference>
<dbReference type="SUPFAM" id="SSF55681">
    <property type="entry name" value="Class II aaRS and biotin synthetases"/>
    <property type="match status" value="1"/>
</dbReference>
<dbReference type="SUPFAM" id="SSF55261">
    <property type="entry name" value="GAD domain-like"/>
    <property type="match status" value="1"/>
</dbReference>
<dbReference type="SUPFAM" id="SSF50249">
    <property type="entry name" value="Nucleic acid-binding proteins"/>
    <property type="match status" value="1"/>
</dbReference>
<dbReference type="PROSITE" id="PS50862">
    <property type="entry name" value="AA_TRNA_LIGASE_II"/>
    <property type="match status" value="1"/>
</dbReference>